<protein>
    <recommendedName>
        <fullName>Ubiquitin carboxyl-terminal hydrolase 49</fullName>
        <ecNumber>3.4.19.12</ecNumber>
    </recommendedName>
    <alternativeName>
        <fullName>Deubiquitinating enzyme 49</fullName>
    </alternativeName>
    <alternativeName>
        <fullName>Ubiquitin thioesterase 49</fullName>
    </alternativeName>
    <alternativeName>
        <fullName>Ubiquitin-specific-processing protease 49</fullName>
    </alternativeName>
</protein>
<reference key="1">
    <citation type="journal article" date="2009" name="PLoS Biol.">
        <title>Lineage-specific biology revealed by a finished genome assembly of the mouse.</title>
        <authorList>
            <person name="Church D.M."/>
            <person name="Goodstadt L."/>
            <person name="Hillier L.W."/>
            <person name="Zody M.C."/>
            <person name="Goldstein S."/>
            <person name="She X."/>
            <person name="Bult C.J."/>
            <person name="Agarwala R."/>
            <person name="Cherry J.L."/>
            <person name="DiCuccio M."/>
            <person name="Hlavina W."/>
            <person name="Kapustin Y."/>
            <person name="Meric P."/>
            <person name="Maglott D."/>
            <person name="Birtle Z."/>
            <person name="Marques A.C."/>
            <person name="Graves T."/>
            <person name="Zhou S."/>
            <person name="Teague B."/>
            <person name="Potamousis K."/>
            <person name="Churas C."/>
            <person name="Place M."/>
            <person name="Herschleb J."/>
            <person name="Runnheim R."/>
            <person name="Forrest D."/>
            <person name="Amos-Landgraf J."/>
            <person name="Schwartz D.C."/>
            <person name="Cheng Z."/>
            <person name="Lindblad-Toh K."/>
            <person name="Eichler E.E."/>
            <person name="Ponting C.P."/>
        </authorList>
    </citation>
    <scope>NUCLEOTIDE SEQUENCE [LARGE SCALE GENOMIC DNA]</scope>
    <source>
        <strain>C57BL/6J</strain>
    </source>
</reference>
<reference key="2">
    <citation type="journal article" date="2004" name="Genome Res.">
        <title>The status, quality, and expansion of the NIH full-length cDNA project: the Mammalian Gene Collection (MGC).</title>
        <authorList>
            <consortium name="The MGC Project Team"/>
        </authorList>
    </citation>
    <scope>NUCLEOTIDE SEQUENCE [LARGE SCALE MRNA]</scope>
    <source>
        <strain>C57BL/6J</strain>
        <tissue>Brain</tissue>
    </source>
</reference>
<reference key="3">
    <citation type="journal article" date="2019" name="PLoS Pathog.">
        <title>USP49 negatively regulates cellular antiviral responses via deconjugating K63-linked ubiquitination of MITA.</title>
        <authorList>
            <person name="Ye L."/>
            <person name="Zhang Q."/>
            <person name="Liuyu T."/>
            <person name="Xu Z."/>
            <person name="Zhang M.X."/>
            <person name="Luo M.H."/>
            <person name="Zeng W.B."/>
            <person name="Zhu Q."/>
            <person name="Lin D."/>
            <person name="Zhong B."/>
        </authorList>
    </citation>
    <scope>FUNCTION</scope>
    <scope>DISRUPTION PHENOTYPE</scope>
</reference>
<dbReference type="EC" id="3.4.19.12"/>
<dbReference type="EMBL" id="GL456179">
    <property type="status" value="NOT_ANNOTATED_CDS"/>
    <property type="molecule type" value="Genomic_DNA"/>
</dbReference>
<dbReference type="EMBL" id="BC060712">
    <property type="protein sequence ID" value="AAH60712.1"/>
    <property type="molecule type" value="mRNA"/>
</dbReference>
<dbReference type="CCDS" id="CCDS28852.1"/>
<dbReference type="RefSeq" id="NP_940813.1">
    <property type="nucleotide sequence ID" value="NM_198421.2"/>
</dbReference>
<dbReference type="BioGRID" id="230330">
    <property type="interactions" value="2"/>
</dbReference>
<dbReference type="FunCoup" id="Q6P9L4">
    <property type="interactions" value="1188"/>
</dbReference>
<dbReference type="STRING" id="10090.ENSMUSP00000024779"/>
<dbReference type="MEROPS" id="C19.073"/>
<dbReference type="iPTMnet" id="Q6P9L4"/>
<dbReference type="PhosphoSitePlus" id="Q6P9L4"/>
<dbReference type="jPOST" id="Q6P9L4"/>
<dbReference type="PaxDb" id="10090-ENSMUSP00000024779"/>
<dbReference type="ProteomicsDB" id="297709"/>
<dbReference type="Antibodypedia" id="35153">
    <property type="antibodies" value="109 antibodies from 22 providers"/>
</dbReference>
<dbReference type="DNASU" id="224836"/>
<dbReference type="Ensembl" id="ENSMUST00000024779.15">
    <property type="protein sequence ID" value="ENSMUSP00000024779.9"/>
    <property type="gene ID" value="ENSMUSG00000090115.8"/>
</dbReference>
<dbReference type="GeneID" id="224836"/>
<dbReference type="KEGG" id="mmu:224836"/>
<dbReference type="UCSC" id="uc008cvv.1">
    <property type="organism name" value="mouse"/>
</dbReference>
<dbReference type="AGR" id="MGI:2685391"/>
<dbReference type="CTD" id="25862"/>
<dbReference type="MGI" id="MGI:2685391">
    <property type="gene designation" value="Usp49"/>
</dbReference>
<dbReference type="VEuPathDB" id="HostDB:ENSMUSG00000090115"/>
<dbReference type="eggNOG" id="KOG1867">
    <property type="taxonomic scope" value="Eukaryota"/>
</dbReference>
<dbReference type="GeneTree" id="ENSGT00940000157997"/>
<dbReference type="HOGENOM" id="CLU_008279_13_1_1"/>
<dbReference type="InParanoid" id="Q6P9L4"/>
<dbReference type="OMA" id="GQKQDQP"/>
<dbReference type="OrthoDB" id="21192at2759"/>
<dbReference type="PhylomeDB" id="Q6P9L4"/>
<dbReference type="TreeFam" id="TF315281"/>
<dbReference type="BioGRID-ORCS" id="224836">
    <property type="hits" value="3 hits in 79 CRISPR screens"/>
</dbReference>
<dbReference type="ChiTaRS" id="Usp49">
    <property type="organism name" value="mouse"/>
</dbReference>
<dbReference type="PRO" id="PR:Q6P9L4"/>
<dbReference type="Proteomes" id="UP000000589">
    <property type="component" value="Chromosome 17"/>
</dbReference>
<dbReference type="RNAct" id="Q6P9L4">
    <property type="molecule type" value="protein"/>
</dbReference>
<dbReference type="Bgee" id="ENSMUSG00000090115">
    <property type="expression patterns" value="Expressed in secondary oocyte and 65 other cell types or tissues"/>
</dbReference>
<dbReference type="ExpressionAtlas" id="Q6P9L4">
    <property type="expression patterns" value="baseline and differential"/>
</dbReference>
<dbReference type="GO" id="GO:0005737">
    <property type="term" value="C:cytoplasm"/>
    <property type="evidence" value="ECO:0007669"/>
    <property type="project" value="UniProtKB-SubCell"/>
</dbReference>
<dbReference type="GO" id="GO:0005634">
    <property type="term" value="C:nucleus"/>
    <property type="evidence" value="ECO:0007669"/>
    <property type="project" value="UniProtKB-SubCell"/>
</dbReference>
<dbReference type="GO" id="GO:0004843">
    <property type="term" value="F:cysteine-type deubiquitinase activity"/>
    <property type="evidence" value="ECO:0000250"/>
    <property type="project" value="UniProtKB"/>
</dbReference>
<dbReference type="GO" id="GO:0004197">
    <property type="term" value="F:cysteine-type endopeptidase activity"/>
    <property type="evidence" value="ECO:0000250"/>
    <property type="project" value="UniProtKB"/>
</dbReference>
<dbReference type="GO" id="GO:0042393">
    <property type="term" value="F:histone binding"/>
    <property type="evidence" value="ECO:0000250"/>
    <property type="project" value="UniProtKB"/>
</dbReference>
<dbReference type="GO" id="GO:0140936">
    <property type="term" value="F:histone H2B deubiquitinase activity"/>
    <property type="evidence" value="ECO:0000250"/>
    <property type="project" value="UniProtKB"/>
</dbReference>
<dbReference type="GO" id="GO:0008270">
    <property type="term" value="F:zinc ion binding"/>
    <property type="evidence" value="ECO:0007669"/>
    <property type="project" value="UniProtKB-KW"/>
</dbReference>
<dbReference type="GO" id="GO:0000398">
    <property type="term" value="P:mRNA splicing, via spliceosome"/>
    <property type="evidence" value="ECO:0000250"/>
    <property type="project" value="UniProtKB"/>
</dbReference>
<dbReference type="GO" id="GO:0051898">
    <property type="term" value="P:negative regulation of phosphatidylinositol 3-kinase/protein kinase B signal transduction"/>
    <property type="evidence" value="ECO:0007669"/>
    <property type="project" value="Ensembl"/>
</dbReference>
<dbReference type="GO" id="GO:0016579">
    <property type="term" value="P:protein deubiquitination"/>
    <property type="evidence" value="ECO:0007669"/>
    <property type="project" value="Ensembl"/>
</dbReference>
<dbReference type="GO" id="GO:0006508">
    <property type="term" value="P:proteolysis"/>
    <property type="evidence" value="ECO:0007669"/>
    <property type="project" value="UniProtKB-KW"/>
</dbReference>
<dbReference type="FunFam" id="3.30.40.10:FF:000067">
    <property type="entry name" value="Ubiquitinyl hydrolase 1"/>
    <property type="match status" value="1"/>
</dbReference>
<dbReference type="FunFam" id="3.90.70.10:FF:000028">
    <property type="entry name" value="Ubiquitinyl hydrolase 1"/>
    <property type="match status" value="1"/>
</dbReference>
<dbReference type="Gene3D" id="3.90.70.10">
    <property type="entry name" value="Cysteine proteinases"/>
    <property type="match status" value="1"/>
</dbReference>
<dbReference type="Gene3D" id="3.30.40.10">
    <property type="entry name" value="Zinc/RING finger domain, C3HC4 (zinc finger)"/>
    <property type="match status" value="1"/>
</dbReference>
<dbReference type="InterPro" id="IPR038765">
    <property type="entry name" value="Papain-like_cys_pep_sf"/>
</dbReference>
<dbReference type="InterPro" id="IPR001394">
    <property type="entry name" value="Peptidase_C19_UCH"/>
</dbReference>
<dbReference type="InterPro" id="IPR050185">
    <property type="entry name" value="Ub_carboxyl-term_hydrolase"/>
</dbReference>
<dbReference type="InterPro" id="IPR018200">
    <property type="entry name" value="USP_CS"/>
</dbReference>
<dbReference type="InterPro" id="IPR028889">
    <property type="entry name" value="USP_dom"/>
</dbReference>
<dbReference type="InterPro" id="IPR013083">
    <property type="entry name" value="Znf_RING/FYVE/PHD"/>
</dbReference>
<dbReference type="InterPro" id="IPR001607">
    <property type="entry name" value="Znf_UBP"/>
</dbReference>
<dbReference type="PANTHER" id="PTHR21646">
    <property type="entry name" value="UBIQUITIN CARBOXYL-TERMINAL HYDROLASE"/>
    <property type="match status" value="1"/>
</dbReference>
<dbReference type="PANTHER" id="PTHR21646:SF7">
    <property type="entry name" value="UBIQUITIN CARBOXYL-TERMINAL HYDROLASE 49"/>
    <property type="match status" value="1"/>
</dbReference>
<dbReference type="Pfam" id="PF00443">
    <property type="entry name" value="UCH"/>
    <property type="match status" value="1"/>
</dbReference>
<dbReference type="Pfam" id="PF02148">
    <property type="entry name" value="zf-UBP"/>
    <property type="match status" value="1"/>
</dbReference>
<dbReference type="SMART" id="SM00290">
    <property type="entry name" value="ZnF_UBP"/>
    <property type="match status" value="1"/>
</dbReference>
<dbReference type="SUPFAM" id="SSF54001">
    <property type="entry name" value="Cysteine proteinases"/>
    <property type="match status" value="1"/>
</dbReference>
<dbReference type="SUPFAM" id="SSF57850">
    <property type="entry name" value="RING/U-box"/>
    <property type="match status" value="1"/>
</dbReference>
<dbReference type="PROSITE" id="PS00972">
    <property type="entry name" value="USP_1"/>
    <property type="match status" value="1"/>
</dbReference>
<dbReference type="PROSITE" id="PS00973">
    <property type="entry name" value="USP_2"/>
    <property type="match status" value="1"/>
</dbReference>
<dbReference type="PROSITE" id="PS50235">
    <property type="entry name" value="USP_3"/>
    <property type="match status" value="1"/>
</dbReference>
<dbReference type="PROSITE" id="PS50271">
    <property type="entry name" value="ZF_UBP"/>
    <property type="match status" value="1"/>
</dbReference>
<sequence>MDRCKHVGRLRLAQDHSILNPQKWCCLQCATTESAWACLKCSHVACGRYIEDHALKHFEETGHPLAMEVRDLYVFCYLCKDYVLNDNPEGDLKLLRSSLLAVRGQKQDLLARRGRTLRSTAAGEDVVPPQRTPQGQPQMLTALWYRRQRLLAKTLRLWFQKSSRGRAQLEQRRQEEALERKKEAARQRRREVKRRLLEELASAPPRKSARLLLHAPGPVAVRPATLATSRRLSAAALNPRRQPAVAPGVTGLRNLGNTCYMNSILQVLSHLQKFRECFLNLDPSTSEHLFPQATNGKAQLSGRPASSSAAELSVRSVRAQGCEPQGLCWSSGASISRSLELIQNKEPSSKHISLCHELHTLFRVMWSGKWALVSPFAMLHSVWSLIPAFRGYDQQDAQEFLCELLHKVQQELESEGSTRRILIPFSQRKLTKQVLKVVNTIFHGQLLSQVTCISCNYKSNTIEPFWDLSLEFPERYHCIEKGFVPLNQTECLLTEMLAKFTETEALEGRIYACDQCNSKRRKSNPKPLVLSEARKQLMIYRLPQVLRLHLKRFRWSGRNHREKIGVHVIFDQVLTMEPYCCRDMLSSLDKETFAYDLSAVVMHHGKGFGSGHYTAYCYNTEGGFWVHCNDSKLDVCSVEEVCKTQAYILFYTRRTVQGSAKLSEPHLQAQVHSSSKDERRTYTLP</sequence>
<accession>Q6P9L4</accession>
<organism>
    <name type="scientific">Mus musculus</name>
    <name type="common">Mouse</name>
    <dbReference type="NCBI Taxonomy" id="10090"/>
    <lineage>
        <taxon>Eukaryota</taxon>
        <taxon>Metazoa</taxon>
        <taxon>Chordata</taxon>
        <taxon>Craniata</taxon>
        <taxon>Vertebrata</taxon>
        <taxon>Euteleostomi</taxon>
        <taxon>Mammalia</taxon>
        <taxon>Eutheria</taxon>
        <taxon>Euarchontoglires</taxon>
        <taxon>Glires</taxon>
        <taxon>Rodentia</taxon>
        <taxon>Myomorpha</taxon>
        <taxon>Muroidea</taxon>
        <taxon>Muridae</taxon>
        <taxon>Murinae</taxon>
        <taxon>Mus</taxon>
        <taxon>Mus</taxon>
    </lineage>
</organism>
<feature type="chain" id="PRO_0000080679" description="Ubiquitin carboxyl-terminal hydrolase 49">
    <location>
        <begin position="1"/>
        <end position="685"/>
    </location>
</feature>
<feature type="domain" description="USP">
    <location>
        <begin position="250"/>
        <end position="654"/>
    </location>
</feature>
<feature type="zinc finger region" description="UBP-type" evidence="2">
    <location>
        <begin position="2"/>
        <end position="99"/>
    </location>
</feature>
<feature type="active site" description="Nucleophile" evidence="3 4">
    <location>
        <position position="259"/>
    </location>
</feature>
<feature type="active site" description="Proton acceptor" evidence="3 4">
    <location>
        <position position="612"/>
    </location>
</feature>
<feature type="binding site" evidence="2">
    <location>
        <position position="4"/>
    </location>
    <ligand>
        <name>Zn(2+)</name>
        <dbReference type="ChEBI" id="CHEBI:29105"/>
        <label>1</label>
    </ligand>
</feature>
<feature type="binding site" evidence="2">
    <location>
        <position position="6"/>
    </location>
    <ligand>
        <name>Zn(2+)</name>
        <dbReference type="ChEBI" id="CHEBI:29105"/>
        <label>1</label>
    </ligand>
</feature>
<feature type="binding site" evidence="2">
    <location>
        <position position="26"/>
    </location>
    <ligand>
        <name>Zn(2+)</name>
        <dbReference type="ChEBI" id="CHEBI:29105"/>
        <label>2</label>
    </ligand>
</feature>
<feature type="binding site" evidence="2">
    <location>
        <position position="29"/>
    </location>
    <ligand>
        <name>Zn(2+)</name>
        <dbReference type="ChEBI" id="CHEBI:29105"/>
        <label>2</label>
    </ligand>
</feature>
<feature type="binding site" evidence="2">
    <location>
        <position position="38"/>
    </location>
    <ligand>
        <name>Zn(2+)</name>
        <dbReference type="ChEBI" id="CHEBI:29105"/>
        <label>3</label>
    </ligand>
</feature>
<feature type="binding site" evidence="2">
    <location>
        <position position="41"/>
    </location>
    <ligand>
        <name>Zn(2+)</name>
        <dbReference type="ChEBI" id="CHEBI:29105"/>
        <label>3</label>
    </ligand>
</feature>
<feature type="binding site" evidence="2">
    <location>
        <position position="46"/>
    </location>
    <ligand>
        <name>Zn(2+)</name>
        <dbReference type="ChEBI" id="CHEBI:29105"/>
        <label>2</label>
    </ligand>
</feature>
<feature type="binding site" evidence="2">
    <location>
        <position position="53"/>
    </location>
    <ligand>
        <name>Zn(2+)</name>
        <dbReference type="ChEBI" id="CHEBI:29105"/>
        <label>2</label>
    </ligand>
</feature>
<feature type="binding site" evidence="2">
    <location>
        <position position="57"/>
    </location>
    <ligand>
        <name>Zn(2+)</name>
        <dbReference type="ChEBI" id="CHEBI:29105"/>
        <label>3</label>
    </ligand>
</feature>
<feature type="binding site" evidence="2">
    <location>
        <position position="63"/>
    </location>
    <ligand>
        <name>Zn(2+)</name>
        <dbReference type="ChEBI" id="CHEBI:29105"/>
        <label>3</label>
    </ligand>
</feature>
<feature type="binding site" evidence="2">
    <location>
        <position position="76"/>
    </location>
    <ligand>
        <name>Zn(2+)</name>
        <dbReference type="ChEBI" id="CHEBI:29105"/>
        <label>1</label>
    </ligand>
</feature>
<feature type="binding site" evidence="2">
    <location>
        <position position="79"/>
    </location>
    <ligand>
        <name>Zn(2+)</name>
        <dbReference type="ChEBI" id="CHEBI:29105"/>
        <label>1</label>
    </ligand>
</feature>
<proteinExistence type="evidence at transcript level"/>
<name>UBP49_MOUSE</name>
<keyword id="KW-0156">Chromatin regulator</keyword>
<keyword id="KW-0963">Cytoplasm</keyword>
<keyword id="KW-0378">Hydrolase</keyword>
<keyword id="KW-0479">Metal-binding</keyword>
<keyword id="KW-0507">mRNA processing</keyword>
<keyword id="KW-0508">mRNA splicing</keyword>
<keyword id="KW-0539">Nucleus</keyword>
<keyword id="KW-0645">Protease</keyword>
<keyword id="KW-1185">Reference proteome</keyword>
<keyword id="KW-0788">Thiol protease</keyword>
<keyword id="KW-0833">Ubl conjugation pathway</keyword>
<keyword id="KW-0862">Zinc</keyword>
<keyword id="KW-0863">Zinc-finger</keyword>
<evidence type="ECO:0000250" key="1">
    <source>
        <dbReference type="UniProtKB" id="Q70CQ1"/>
    </source>
</evidence>
<evidence type="ECO:0000255" key="2">
    <source>
        <dbReference type="PROSITE-ProRule" id="PRU00502"/>
    </source>
</evidence>
<evidence type="ECO:0000255" key="3">
    <source>
        <dbReference type="PROSITE-ProRule" id="PRU10092"/>
    </source>
</evidence>
<evidence type="ECO:0000255" key="4">
    <source>
        <dbReference type="PROSITE-ProRule" id="PRU10093"/>
    </source>
</evidence>
<evidence type="ECO:0000269" key="5">
    <source>
    </source>
</evidence>
<evidence type="ECO:0000305" key="6"/>
<gene>
    <name type="primary">Usp49</name>
</gene>
<comment type="function">
    <text evidence="1">Deubiquitinase that plays a role in several cellular processes including transcriptional regulation, cell cycle progression or innate immunity. Specifically deubiquitinates histone H2B at 'Lys-120' (H2BK120Ub), a specific tag for epigenetic transcriptional activation and acts as a regulator of mRNA splicing. Antagonizes DNA double-strand break-induced ubiquitination of H2AX thereby participating in the maintenance of genome integrity. Plays a role in the negative regulation of cell proliferation through the AKT pathway by deubiquitinating FKBP51, leading to enhanced AKT1 dephosphorylation by PHLPP1. Also regulates the mitotic spindle checkpoint and prevents aneuploidy. Negatively regulates cellular antiviral responses via deconjugating 'Lys-63'-linked ubiquitination of STING1.</text>
</comment>
<comment type="catalytic activity">
    <reaction evidence="1">
        <text>Thiol-dependent hydrolysis of ester, thioester, amide, peptide and isopeptide bonds formed by the C-terminal Gly of ubiquitin (a 76-residue protein attached to proteins as an intracellular targeting signal).</text>
        <dbReference type="EC" id="3.4.19.12"/>
    </reaction>
</comment>
<comment type="subunit">
    <text evidence="1">Component of a complex with RUVBL1 and PSMC5. Interacts with centrins CETN1, CETN2 and CETN3.</text>
</comment>
<comment type="subcellular location">
    <subcellularLocation>
        <location evidence="1">Nucleus</location>
    </subcellularLocation>
    <subcellularLocation>
        <location evidence="1">Cytoplasm</location>
    </subcellularLocation>
</comment>
<comment type="disruption phenotype">
    <text evidence="5">Usp49-deletion mice exhibit increased resistance to lethal HHV-1 infection.</text>
</comment>
<comment type="similarity">
    <text evidence="6">Belongs to the peptidase C19 family.</text>
</comment>